<organism>
    <name type="scientific">Bordetella parapertussis (strain 12822 / ATCC BAA-587 / NCTC 13253)</name>
    <dbReference type="NCBI Taxonomy" id="257311"/>
    <lineage>
        <taxon>Bacteria</taxon>
        <taxon>Pseudomonadati</taxon>
        <taxon>Pseudomonadota</taxon>
        <taxon>Betaproteobacteria</taxon>
        <taxon>Burkholderiales</taxon>
        <taxon>Alcaligenaceae</taxon>
        <taxon>Bordetella</taxon>
    </lineage>
</organism>
<accession>Q7W980</accession>
<comment type="function">
    <text evidence="1">Catalyzes the acetylation of L-2,4-diaminobutyrate (DABA) to gamma-N-acetyl-alpha,gamma-diaminobutyric acid (ADABA) with acetyl coenzyme A.</text>
</comment>
<comment type="catalytic activity">
    <reaction>
        <text>L-2,4-diaminobutanoate + acetyl-CoA = (2S)-4-acetamido-2-aminobutanoate + CoA + H(+)</text>
        <dbReference type="Rhea" id="RHEA:16901"/>
        <dbReference type="ChEBI" id="CHEBI:15378"/>
        <dbReference type="ChEBI" id="CHEBI:57287"/>
        <dbReference type="ChEBI" id="CHEBI:57288"/>
        <dbReference type="ChEBI" id="CHEBI:58761"/>
        <dbReference type="ChEBI" id="CHEBI:58929"/>
        <dbReference type="EC" id="2.3.1.178"/>
    </reaction>
</comment>
<comment type="pathway">
    <text>Amine and polyamine biosynthesis; ectoine biosynthesis; L-ectoine from L-aspartate 4-semialdehyde: step 2/3.</text>
</comment>
<comment type="similarity">
    <text evidence="3">Belongs to the acetyltransferase family. EctA subfamily.</text>
</comment>
<protein>
    <recommendedName>
        <fullName>L-2,4-diaminobutyric acid acetyltransferase</fullName>
        <shortName>DABA acetyltransferase</shortName>
        <ecNumber>2.3.1.178</ecNumber>
    </recommendedName>
</protein>
<reference key="1">
    <citation type="journal article" date="2003" name="Nat. Genet.">
        <title>Comparative analysis of the genome sequences of Bordetella pertussis, Bordetella parapertussis and Bordetella bronchiseptica.</title>
        <authorList>
            <person name="Parkhill J."/>
            <person name="Sebaihia M."/>
            <person name="Preston A."/>
            <person name="Murphy L.D."/>
            <person name="Thomson N.R."/>
            <person name="Harris D.E."/>
            <person name="Holden M.T.G."/>
            <person name="Churcher C.M."/>
            <person name="Bentley S.D."/>
            <person name="Mungall K.L."/>
            <person name="Cerdeno-Tarraga A.-M."/>
            <person name="Temple L."/>
            <person name="James K.D."/>
            <person name="Harris B."/>
            <person name="Quail M.A."/>
            <person name="Achtman M."/>
            <person name="Atkin R."/>
            <person name="Baker S."/>
            <person name="Basham D."/>
            <person name="Bason N."/>
            <person name="Cherevach I."/>
            <person name="Chillingworth T."/>
            <person name="Collins M."/>
            <person name="Cronin A."/>
            <person name="Davis P."/>
            <person name="Doggett J."/>
            <person name="Feltwell T."/>
            <person name="Goble A."/>
            <person name="Hamlin N."/>
            <person name="Hauser H."/>
            <person name="Holroyd S."/>
            <person name="Jagels K."/>
            <person name="Leather S."/>
            <person name="Moule S."/>
            <person name="Norberczak H."/>
            <person name="O'Neil S."/>
            <person name="Ormond D."/>
            <person name="Price C."/>
            <person name="Rabbinowitsch E."/>
            <person name="Rutter S."/>
            <person name="Sanders M."/>
            <person name="Saunders D."/>
            <person name="Seeger K."/>
            <person name="Sharp S."/>
            <person name="Simmonds M."/>
            <person name="Skelton J."/>
            <person name="Squares R."/>
            <person name="Squares S."/>
            <person name="Stevens K."/>
            <person name="Unwin L."/>
            <person name="Whitehead S."/>
            <person name="Barrell B.G."/>
            <person name="Maskell D.J."/>
        </authorList>
    </citation>
    <scope>NUCLEOTIDE SEQUENCE [LARGE SCALE GENOMIC DNA]</scope>
    <source>
        <strain>12822 / ATCC BAA-587 / NCTC 13253</strain>
    </source>
</reference>
<name>ECTA_BORPA</name>
<sequence length="186" mass="20729">MRKDETSNTSPDISVAQPASALRYHLRPPRRNDGAAIHQLVSECPPLDLNSLYAYLLLCEHHAHTCVVAESPGGRIDGFVSAYLLPTRPDVLFVWQVAVHSRARGHRLGRAMLGHILERQECRHVRHLETTVGPDNQASRRTFAGLAGERGAHVSEQPFFDRQAFGGADHDDEMLLRIGPFTHPPH</sequence>
<proteinExistence type="evidence at protein level"/>
<keyword id="KW-0002">3D-structure</keyword>
<keyword id="KW-0012">Acyltransferase</keyword>
<keyword id="KW-0808">Transferase</keyword>
<dbReference type="EC" id="2.3.1.178"/>
<dbReference type="EMBL" id="BX640428">
    <property type="protein sequence ID" value="CAE37189.1"/>
    <property type="molecule type" value="Genomic_DNA"/>
</dbReference>
<dbReference type="RefSeq" id="WP_010928263.1">
    <property type="nucleotide sequence ID" value="NC_002928.3"/>
</dbReference>
<dbReference type="PDB" id="3D3S">
    <property type="method" value="X-ray"/>
    <property type="resolution" value="1.87 A"/>
    <property type="chains" value="A/B/C/D=1-186"/>
</dbReference>
<dbReference type="PDBsum" id="3D3S"/>
<dbReference type="SMR" id="Q7W980"/>
<dbReference type="GeneID" id="93203657"/>
<dbReference type="KEGG" id="bpa:BPP1888"/>
<dbReference type="HOGENOM" id="CLU_111896_0_0_4"/>
<dbReference type="UniPathway" id="UPA00067">
    <property type="reaction ID" value="UER00122"/>
</dbReference>
<dbReference type="EvolutionaryTrace" id="Q7W980"/>
<dbReference type="Proteomes" id="UP000001421">
    <property type="component" value="Chromosome"/>
</dbReference>
<dbReference type="GO" id="GO:0033816">
    <property type="term" value="F:diaminobutyrate acetyltransferase activity"/>
    <property type="evidence" value="ECO:0007669"/>
    <property type="project" value="UniProtKB-EC"/>
</dbReference>
<dbReference type="GO" id="GO:0019491">
    <property type="term" value="P:ectoine biosynthetic process"/>
    <property type="evidence" value="ECO:0007669"/>
    <property type="project" value="UniProtKB-UniPathway"/>
</dbReference>
<dbReference type="CDD" id="cd04301">
    <property type="entry name" value="NAT_SF"/>
    <property type="match status" value="1"/>
</dbReference>
<dbReference type="Gene3D" id="3.40.630.30">
    <property type="match status" value="1"/>
</dbReference>
<dbReference type="InterPro" id="IPR016181">
    <property type="entry name" value="Acyl_CoA_acyltransferase"/>
</dbReference>
<dbReference type="InterPro" id="IPR050832">
    <property type="entry name" value="Bact_Acetyltransf"/>
</dbReference>
<dbReference type="InterPro" id="IPR012772">
    <property type="entry name" value="Ectoine_EctA"/>
</dbReference>
<dbReference type="InterPro" id="IPR000182">
    <property type="entry name" value="GNAT_dom"/>
</dbReference>
<dbReference type="NCBIfam" id="TIGR02406">
    <property type="entry name" value="ectoine_EctA"/>
    <property type="match status" value="1"/>
</dbReference>
<dbReference type="PANTHER" id="PTHR43877">
    <property type="entry name" value="AMINOALKYLPHOSPHONATE N-ACETYLTRANSFERASE-RELATED-RELATED"/>
    <property type="match status" value="1"/>
</dbReference>
<dbReference type="Pfam" id="PF00583">
    <property type="entry name" value="Acetyltransf_1"/>
    <property type="match status" value="1"/>
</dbReference>
<dbReference type="SUPFAM" id="SSF55729">
    <property type="entry name" value="Acyl-CoA N-acyltransferases (Nat)"/>
    <property type="match status" value="1"/>
</dbReference>
<dbReference type="PROSITE" id="PS51186">
    <property type="entry name" value="GNAT"/>
    <property type="match status" value="1"/>
</dbReference>
<evidence type="ECO:0000250" key="1"/>
<evidence type="ECO:0000255" key="2">
    <source>
        <dbReference type="PROSITE-ProRule" id="PRU00532"/>
    </source>
</evidence>
<evidence type="ECO:0000305" key="3"/>
<evidence type="ECO:0007829" key="4">
    <source>
        <dbReference type="PDB" id="3D3S"/>
    </source>
</evidence>
<gene>
    <name type="primary">ectA</name>
    <name type="ordered locus">BPP1888</name>
</gene>
<feature type="chain" id="PRO_0000220084" description="L-2,4-diaminobutyric acid acetyltransferase">
    <location>
        <begin position="1"/>
        <end position="186"/>
    </location>
</feature>
<feature type="domain" description="N-acetyltransferase" evidence="2">
    <location>
        <begin position="24"/>
        <end position="179"/>
    </location>
</feature>
<feature type="strand" evidence="4">
    <location>
        <begin position="25"/>
        <end position="27"/>
    </location>
</feature>
<feature type="helix" evidence="4">
    <location>
        <begin position="31"/>
        <end position="33"/>
    </location>
</feature>
<feature type="helix" evidence="4">
    <location>
        <begin position="34"/>
        <end position="42"/>
    </location>
</feature>
<feature type="helix" evidence="4">
    <location>
        <begin position="52"/>
        <end position="61"/>
    </location>
</feature>
<feature type="helix" evidence="4">
    <location>
        <begin position="63"/>
        <end position="65"/>
    </location>
</feature>
<feature type="strand" evidence="4">
    <location>
        <begin position="67"/>
        <end position="70"/>
    </location>
</feature>
<feature type="strand" evidence="4">
    <location>
        <begin position="76"/>
        <end position="84"/>
    </location>
</feature>
<feature type="strand" evidence="4">
    <location>
        <begin position="91"/>
        <end position="99"/>
    </location>
</feature>
<feature type="helix" evidence="4">
    <location>
        <begin position="101"/>
        <end position="103"/>
    </location>
</feature>
<feature type="helix" evidence="4">
    <location>
        <begin position="108"/>
        <end position="118"/>
    </location>
</feature>
<feature type="helix" evidence="4">
    <location>
        <begin position="120"/>
        <end position="122"/>
    </location>
</feature>
<feature type="strand" evidence="4">
    <location>
        <begin position="127"/>
        <end position="132"/>
    </location>
</feature>
<feature type="helix" evidence="4">
    <location>
        <begin position="137"/>
        <end position="148"/>
    </location>
</feature>
<feature type="turn" evidence="4">
    <location>
        <begin position="149"/>
        <end position="151"/>
    </location>
</feature>
<feature type="strand" evidence="4">
    <location>
        <begin position="153"/>
        <end position="160"/>
    </location>
</feature>
<feature type="helix" evidence="4">
    <location>
        <begin position="162"/>
        <end position="165"/>
    </location>
</feature>
<feature type="strand" evidence="4">
    <location>
        <begin position="173"/>
        <end position="179"/>
    </location>
</feature>